<reference key="1">
    <citation type="journal article" date="2001" name="Proc. Natl. Acad. Sci. U.S.A.">
        <title>Analysis of the chromosome sequence of the legume symbiont Sinorhizobium meliloti strain 1021.</title>
        <authorList>
            <person name="Capela D."/>
            <person name="Barloy-Hubler F."/>
            <person name="Gouzy J."/>
            <person name="Bothe G."/>
            <person name="Ampe F."/>
            <person name="Batut J."/>
            <person name="Boistard P."/>
            <person name="Becker A."/>
            <person name="Boutry M."/>
            <person name="Cadieu E."/>
            <person name="Dreano S."/>
            <person name="Gloux S."/>
            <person name="Godrie T."/>
            <person name="Goffeau A."/>
            <person name="Kahn D."/>
            <person name="Kiss E."/>
            <person name="Lelaure V."/>
            <person name="Masuy D."/>
            <person name="Pohl T."/>
            <person name="Portetelle D."/>
            <person name="Puehler A."/>
            <person name="Purnelle B."/>
            <person name="Ramsperger U."/>
            <person name="Renard C."/>
            <person name="Thebault P."/>
            <person name="Vandenbol M."/>
            <person name="Weidner S."/>
            <person name="Galibert F."/>
        </authorList>
    </citation>
    <scope>NUCLEOTIDE SEQUENCE [LARGE SCALE GENOMIC DNA]</scope>
    <source>
        <strain>1021</strain>
    </source>
</reference>
<reference key="2">
    <citation type="journal article" date="2001" name="Science">
        <title>The composite genome of the legume symbiont Sinorhizobium meliloti.</title>
        <authorList>
            <person name="Galibert F."/>
            <person name="Finan T.M."/>
            <person name="Long S.R."/>
            <person name="Puehler A."/>
            <person name="Abola P."/>
            <person name="Ampe F."/>
            <person name="Barloy-Hubler F."/>
            <person name="Barnett M.J."/>
            <person name="Becker A."/>
            <person name="Boistard P."/>
            <person name="Bothe G."/>
            <person name="Boutry M."/>
            <person name="Bowser L."/>
            <person name="Buhrmester J."/>
            <person name="Cadieu E."/>
            <person name="Capela D."/>
            <person name="Chain P."/>
            <person name="Cowie A."/>
            <person name="Davis R.W."/>
            <person name="Dreano S."/>
            <person name="Federspiel N.A."/>
            <person name="Fisher R.F."/>
            <person name="Gloux S."/>
            <person name="Godrie T."/>
            <person name="Goffeau A."/>
            <person name="Golding B."/>
            <person name="Gouzy J."/>
            <person name="Gurjal M."/>
            <person name="Hernandez-Lucas I."/>
            <person name="Hong A."/>
            <person name="Huizar L."/>
            <person name="Hyman R.W."/>
            <person name="Jones T."/>
            <person name="Kahn D."/>
            <person name="Kahn M.L."/>
            <person name="Kalman S."/>
            <person name="Keating D.H."/>
            <person name="Kiss E."/>
            <person name="Komp C."/>
            <person name="Lelaure V."/>
            <person name="Masuy D."/>
            <person name="Palm C."/>
            <person name="Peck M.C."/>
            <person name="Pohl T.M."/>
            <person name="Portetelle D."/>
            <person name="Purnelle B."/>
            <person name="Ramsperger U."/>
            <person name="Surzycki R."/>
            <person name="Thebault P."/>
            <person name="Vandenbol M."/>
            <person name="Vorhoelter F.J."/>
            <person name="Weidner S."/>
            <person name="Wells D.H."/>
            <person name="Wong K."/>
            <person name="Yeh K.-C."/>
            <person name="Batut J."/>
        </authorList>
    </citation>
    <scope>NUCLEOTIDE SEQUENCE [LARGE SCALE GENOMIC DNA]</scope>
    <source>
        <strain>1021</strain>
    </source>
</reference>
<feature type="chain" id="PRO_0000199834" description="Phosphopentomutase">
    <location>
        <begin position="1"/>
        <end position="406"/>
    </location>
</feature>
<feature type="binding site" evidence="1">
    <location>
        <position position="10"/>
    </location>
    <ligand>
        <name>Mn(2+)</name>
        <dbReference type="ChEBI" id="CHEBI:29035"/>
        <label>1</label>
    </ligand>
</feature>
<feature type="binding site" evidence="1">
    <location>
        <position position="305"/>
    </location>
    <ligand>
        <name>Mn(2+)</name>
        <dbReference type="ChEBI" id="CHEBI:29035"/>
        <label>2</label>
    </ligand>
</feature>
<feature type="binding site" evidence="1">
    <location>
        <position position="310"/>
    </location>
    <ligand>
        <name>Mn(2+)</name>
        <dbReference type="ChEBI" id="CHEBI:29035"/>
        <label>2</label>
    </ligand>
</feature>
<feature type="binding site" evidence="1">
    <location>
        <position position="346"/>
    </location>
    <ligand>
        <name>Mn(2+)</name>
        <dbReference type="ChEBI" id="CHEBI:29035"/>
        <label>1</label>
    </ligand>
</feature>
<feature type="binding site" evidence="1">
    <location>
        <position position="347"/>
    </location>
    <ligand>
        <name>Mn(2+)</name>
        <dbReference type="ChEBI" id="CHEBI:29035"/>
        <label>1</label>
    </ligand>
</feature>
<feature type="binding site" evidence="1">
    <location>
        <position position="358"/>
    </location>
    <ligand>
        <name>Mn(2+)</name>
        <dbReference type="ChEBI" id="CHEBI:29035"/>
        <label>2</label>
    </ligand>
</feature>
<gene>
    <name evidence="1" type="primary">deoB</name>
    <name type="ordered locus">R00133</name>
    <name type="ORF">SMc04119</name>
</gene>
<accession>Q92T47</accession>
<evidence type="ECO:0000255" key="1">
    <source>
        <dbReference type="HAMAP-Rule" id="MF_00740"/>
    </source>
</evidence>
<dbReference type="EC" id="5.4.2.7" evidence="1"/>
<dbReference type="EMBL" id="AL591688">
    <property type="protein sequence ID" value="CAC41520.1"/>
    <property type="molecule type" value="Genomic_DNA"/>
</dbReference>
<dbReference type="RefSeq" id="NP_384239.1">
    <property type="nucleotide sequence ID" value="NC_003047.1"/>
</dbReference>
<dbReference type="RefSeq" id="WP_010968375.1">
    <property type="nucleotide sequence ID" value="NC_003047.1"/>
</dbReference>
<dbReference type="SMR" id="Q92T47"/>
<dbReference type="EnsemblBacteria" id="CAC41520">
    <property type="protein sequence ID" value="CAC41520"/>
    <property type="gene ID" value="SMc04119"/>
</dbReference>
<dbReference type="KEGG" id="sme:SMc04119"/>
<dbReference type="PATRIC" id="fig|266834.11.peg.1492"/>
<dbReference type="eggNOG" id="COG1015">
    <property type="taxonomic scope" value="Bacteria"/>
</dbReference>
<dbReference type="HOGENOM" id="CLU_053861_0_0_5"/>
<dbReference type="OrthoDB" id="9769930at2"/>
<dbReference type="UniPathway" id="UPA00002">
    <property type="reaction ID" value="UER00467"/>
</dbReference>
<dbReference type="Proteomes" id="UP000001976">
    <property type="component" value="Chromosome"/>
</dbReference>
<dbReference type="GO" id="GO:0005829">
    <property type="term" value="C:cytosol"/>
    <property type="evidence" value="ECO:0007669"/>
    <property type="project" value="TreeGrafter"/>
</dbReference>
<dbReference type="GO" id="GO:0000287">
    <property type="term" value="F:magnesium ion binding"/>
    <property type="evidence" value="ECO:0007669"/>
    <property type="project" value="InterPro"/>
</dbReference>
<dbReference type="GO" id="GO:0030145">
    <property type="term" value="F:manganese ion binding"/>
    <property type="evidence" value="ECO:0007669"/>
    <property type="project" value="UniProtKB-UniRule"/>
</dbReference>
<dbReference type="GO" id="GO:0008973">
    <property type="term" value="F:phosphopentomutase activity"/>
    <property type="evidence" value="ECO:0007669"/>
    <property type="project" value="UniProtKB-UniRule"/>
</dbReference>
<dbReference type="GO" id="GO:0006018">
    <property type="term" value="P:2-deoxyribose 1-phosphate catabolic process"/>
    <property type="evidence" value="ECO:0007669"/>
    <property type="project" value="UniProtKB-UniRule"/>
</dbReference>
<dbReference type="GO" id="GO:0006015">
    <property type="term" value="P:5-phosphoribose 1-diphosphate biosynthetic process"/>
    <property type="evidence" value="ECO:0007669"/>
    <property type="project" value="UniProtKB-UniPathway"/>
</dbReference>
<dbReference type="GO" id="GO:0043094">
    <property type="term" value="P:metabolic compound salvage"/>
    <property type="evidence" value="ECO:0007669"/>
    <property type="project" value="InterPro"/>
</dbReference>
<dbReference type="GO" id="GO:0009117">
    <property type="term" value="P:nucleotide metabolic process"/>
    <property type="evidence" value="ECO:0007669"/>
    <property type="project" value="InterPro"/>
</dbReference>
<dbReference type="CDD" id="cd16009">
    <property type="entry name" value="PPM"/>
    <property type="match status" value="1"/>
</dbReference>
<dbReference type="FunFam" id="3.30.70.1250:FF:000001">
    <property type="entry name" value="Phosphopentomutase"/>
    <property type="match status" value="1"/>
</dbReference>
<dbReference type="Gene3D" id="3.40.720.10">
    <property type="entry name" value="Alkaline Phosphatase, subunit A"/>
    <property type="match status" value="1"/>
</dbReference>
<dbReference type="Gene3D" id="3.30.70.1250">
    <property type="entry name" value="Phosphopentomutase"/>
    <property type="match status" value="1"/>
</dbReference>
<dbReference type="HAMAP" id="MF_00740">
    <property type="entry name" value="Phosphopentomut"/>
    <property type="match status" value="1"/>
</dbReference>
<dbReference type="InterPro" id="IPR017850">
    <property type="entry name" value="Alkaline_phosphatase_core_sf"/>
</dbReference>
<dbReference type="InterPro" id="IPR010045">
    <property type="entry name" value="DeoB"/>
</dbReference>
<dbReference type="InterPro" id="IPR006124">
    <property type="entry name" value="Metalloenzyme"/>
</dbReference>
<dbReference type="InterPro" id="IPR024052">
    <property type="entry name" value="Phosphopentomutase_DeoB_cap_sf"/>
</dbReference>
<dbReference type="NCBIfam" id="TIGR01696">
    <property type="entry name" value="deoB"/>
    <property type="match status" value="1"/>
</dbReference>
<dbReference type="NCBIfam" id="NF003766">
    <property type="entry name" value="PRK05362.1"/>
    <property type="match status" value="1"/>
</dbReference>
<dbReference type="PANTHER" id="PTHR21110">
    <property type="entry name" value="PHOSPHOPENTOMUTASE"/>
    <property type="match status" value="1"/>
</dbReference>
<dbReference type="PANTHER" id="PTHR21110:SF0">
    <property type="entry name" value="PHOSPHOPENTOMUTASE"/>
    <property type="match status" value="1"/>
</dbReference>
<dbReference type="Pfam" id="PF01676">
    <property type="entry name" value="Metalloenzyme"/>
    <property type="match status" value="1"/>
</dbReference>
<dbReference type="PIRSF" id="PIRSF001491">
    <property type="entry name" value="Ppentomutase"/>
    <property type="match status" value="1"/>
</dbReference>
<dbReference type="SUPFAM" id="SSF53649">
    <property type="entry name" value="Alkaline phosphatase-like"/>
    <property type="match status" value="1"/>
</dbReference>
<dbReference type="SUPFAM" id="SSF143856">
    <property type="entry name" value="DeoB insert domain-like"/>
    <property type="match status" value="1"/>
</dbReference>
<name>DEOB_RHIME</name>
<protein>
    <recommendedName>
        <fullName evidence="1">Phosphopentomutase</fullName>
        <ecNumber evidence="1">5.4.2.7</ecNumber>
    </recommendedName>
    <alternativeName>
        <fullName evidence="1">Phosphodeoxyribomutase</fullName>
    </alternativeName>
</protein>
<organism>
    <name type="scientific">Rhizobium meliloti (strain 1021)</name>
    <name type="common">Ensifer meliloti</name>
    <name type="synonym">Sinorhizobium meliloti</name>
    <dbReference type="NCBI Taxonomy" id="266834"/>
    <lineage>
        <taxon>Bacteria</taxon>
        <taxon>Pseudomonadati</taxon>
        <taxon>Pseudomonadota</taxon>
        <taxon>Alphaproteobacteria</taxon>
        <taxon>Hyphomicrobiales</taxon>
        <taxon>Rhizobiaceae</taxon>
        <taxon>Sinorhizobium/Ensifer group</taxon>
        <taxon>Sinorhizobium</taxon>
    </lineage>
</organism>
<proteinExistence type="inferred from homology"/>
<sequence length="406" mass="43715">MARAFLFVLDSFGIGNAPDAEAFGDLGADTLGHIAEFCAAGAADRAGLREGPLHLPNMSALGLMHAARLATGRLPAGMALPERVYGIYGAASEVSRGKDTPSGHWEIAGTPVTFDWGYFPAEGDAFPPELVEAICREGDVPGILGNCHASGTDIIARHGEEHMRSGKPICYTSSDSVFQIAAHEQTFGLERLLNLCEVVRRLVDDYNIGRVIARPFVGSDPGSFTRTGNRRDYSVLPPEPTVLDRLQEAGRTVHAIGKIGDIFAHQGVTRLTKANGNMALFDASLEAIEEAEDGALVFTNFVDFDMLYGHRRDVSGYAAALEAFDARLPDLDRRLKPGDMVILTADHGCDPTWRGTDHTRERVPVLMFGPTLRSRSFGIADSFAHIGETVARHLGIGVGPHGRSLI</sequence>
<keyword id="KW-0963">Cytoplasm</keyword>
<keyword id="KW-0413">Isomerase</keyword>
<keyword id="KW-0464">Manganese</keyword>
<keyword id="KW-0479">Metal-binding</keyword>
<keyword id="KW-1185">Reference proteome</keyword>
<comment type="function">
    <text evidence="1">Isomerase that catalyzes the conversion of deoxy-ribose 1-phosphate (dRib-1-P) and ribose 1-phosphate (Rib-1-P) to deoxy-ribose 5-phosphate (dRib-5-P) and ribose 5-phosphate (Rib-5-P), respectively.</text>
</comment>
<comment type="catalytic activity">
    <reaction evidence="1">
        <text>2-deoxy-alpha-D-ribose 1-phosphate = 2-deoxy-D-ribose 5-phosphate</text>
        <dbReference type="Rhea" id="RHEA:27658"/>
        <dbReference type="ChEBI" id="CHEBI:57259"/>
        <dbReference type="ChEBI" id="CHEBI:62877"/>
        <dbReference type="EC" id="5.4.2.7"/>
    </reaction>
</comment>
<comment type="catalytic activity">
    <reaction evidence="1">
        <text>alpha-D-ribose 1-phosphate = D-ribose 5-phosphate</text>
        <dbReference type="Rhea" id="RHEA:18793"/>
        <dbReference type="ChEBI" id="CHEBI:57720"/>
        <dbReference type="ChEBI" id="CHEBI:78346"/>
        <dbReference type="EC" id="5.4.2.7"/>
    </reaction>
</comment>
<comment type="cofactor">
    <cofactor evidence="1">
        <name>Mn(2+)</name>
        <dbReference type="ChEBI" id="CHEBI:29035"/>
    </cofactor>
    <text evidence="1">Binds 2 manganese ions.</text>
</comment>
<comment type="pathway">
    <text evidence="1">Carbohydrate degradation; 2-deoxy-D-ribose 1-phosphate degradation; D-glyceraldehyde 3-phosphate and acetaldehyde from 2-deoxy-alpha-D-ribose 1-phosphate: step 1/2.</text>
</comment>
<comment type="subcellular location">
    <subcellularLocation>
        <location evidence="1">Cytoplasm</location>
    </subcellularLocation>
</comment>
<comment type="similarity">
    <text evidence="1">Belongs to the phosphopentomutase family.</text>
</comment>